<protein>
    <recommendedName>
        <fullName>UPF0758 protein Pfl01_5539</fullName>
    </recommendedName>
</protein>
<comment type="similarity">
    <text evidence="2">Belongs to the UPF0758 family.</text>
</comment>
<feature type="chain" id="PRO_1000001682" description="UPF0758 protein Pfl01_5539">
    <location>
        <begin position="1"/>
        <end position="224"/>
    </location>
</feature>
<feature type="domain" description="MPN" evidence="1">
    <location>
        <begin position="102"/>
        <end position="224"/>
    </location>
</feature>
<feature type="short sequence motif" description="JAMM motif" evidence="1">
    <location>
        <begin position="173"/>
        <end position="186"/>
    </location>
</feature>
<feature type="binding site" evidence="1">
    <location>
        <position position="173"/>
    </location>
    <ligand>
        <name>Zn(2+)</name>
        <dbReference type="ChEBI" id="CHEBI:29105"/>
        <note>catalytic</note>
    </ligand>
</feature>
<feature type="binding site" evidence="1">
    <location>
        <position position="175"/>
    </location>
    <ligand>
        <name>Zn(2+)</name>
        <dbReference type="ChEBI" id="CHEBI:29105"/>
        <note>catalytic</note>
    </ligand>
</feature>
<feature type="binding site" evidence="1">
    <location>
        <position position="186"/>
    </location>
    <ligand>
        <name>Zn(2+)</name>
        <dbReference type="ChEBI" id="CHEBI:29105"/>
        <note>catalytic</note>
    </ligand>
</feature>
<keyword id="KW-0378">Hydrolase</keyword>
<keyword id="KW-0479">Metal-binding</keyword>
<keyword id="KW-0482">Metalloprotease</keyword>
<keyword id="KW-0645">Protease</keyword>
<keyword id="KW-0862">Zinc</keyword>
<sequence>MSIRDWPAAERPRERLLEQGSASLSDAELLAIFLRTGVPGKSAVDLARHLLNQFGSLRLLLEADQEAFSKQLGLGPAKFAQLQAAQEMSKRHLAERSRQKTALENPQVVRDYLKVMLRHEPHEVFGCLFLDSKHQVLTFEALFRGSIDNTAVHPREVVKRSLANNAAAVILCHNHPSGNSDPSQADRLLTKRLQKALELIDVRVLDHFIVGDGEPLSMAECGWM</sequence>
<evidence type="ECO:0000255" key="1">
    <source>
        <dbReference type="PROSITE-ProRule" id="PRU01182"/>
    </source>
</evidence>
<evidence type="ECO:0000305" key="2"/>
<accession>Q3K4M8</accession>
<organism>
    <name type="scientific">Pseudomonas fluorescens (strain Pf0-1)</name>
    <dbReference type="NCBI Taxonomy" id="205922"/>
    <lineage>
        <taxon>Bacteria</taxon>
        <taxon>Pseudomonadati</taxon>
        <taxon>Pseudomonadota</taxon>
        <taxon>Gammaproteobacteria</taxon>
        <taxon>Pseudomonadales</taxon>
        <taxon>Pseudomonadaceae</taxon>
        <taxon>Pseudomonas</taxon>
    </lineage>
</organism>
<reference key="1">
    <citation type="journal article" date="2009" name="Genome Biol.">
        <title>Genomic and genetic analyses of diversity and plant interactions of Pseudomonas fluorescens.</title>
        <authorList>
            <person name="Silby M.W."/>
            <person name="Cerdeno-Tarraga A.M."/>
            <person name="Vernikos G.S."/>
            <person name="Giddens S.R."/>
            <person name="Jackson R.W."/>
            <person name="Preston G.M."/>
            <person name="Zhang X.-X."/>
            <person name="Moon C.D."/>
            <person name="Gehrig S.M."/>
            <person name="Godfrey S.A.C."/>
            <person name="Knight C.G."/>
            <person name="Malone J.G."/>
            <person name="Robinson Z."/>
            <person name="Spiers A.J."/>
            <person name="Harris S."/>
            <person name="Challis G.L."/>
            <person name="Yaxley A.M."/>
            <person name="Harris D."/>
            <person name="Seeger K."/>
            <person name="Murphy L."/>
            <person name="Rutter S."/>
            <person name="Squares R."/>
            <person name="Quail M.A."/>
            <person name="Saunders E."/>
            <person name="Mavromatis K."/>
            <person name="Brettin T.S."/>
            <person name="Bentley S.D."/>
            <person name="Hothersall J."/>
            <person name="Stephens E."/>
            <person name="Thomas C.M."/>
            <person name="Parkhill J."/>
            <person name="Levy S.B."/>
            <person name="Rainey P.B."/>
            <person name="Thomson N.R."/>
        </authorList>
    </citation>
    <scope>NUCLEOTIDE SEQUENCE [LARGE SCALE GENOMIC DNA]</scope>
    <source>
        <strain>Pf0-1</strain>
    </source>
</reference>
<name>Y5539_PSEPF</name>
<proteinExistence type="inferred from homology"/>
<gene>
    <name type="ordered locus">Pfl01_5539</name>
</gene>
<dbReference type="EMBL" id="CP000094">
    <property type="protein sequence ID" value="ABA77276.1"/>
    <property type="molecule type" value="Genomic_DNA"/>
</dbReference>
<dbReference type="SMR" id="Q3K4M8"/>
<dbReference type="KEGG" id="pfo:Pfl01_5539"/>
<dbReference type="eggNOG" id="COG2003">
    <property type="taxonomic scope" value="Bacteria"/>
</dbReference>
<dbReference type="HOGENOM" id="CLU_073529_0_1_6"/>
<dbReference type="Proteomes" id="UP000002704">
    <property type="component" value="Chromosome"/>
</dbReference>
<dbReference type="GO" id="GO:0046872">
    <property type="term" value="F:metal ion binding"/>
    <property type="evidence" value="ECO:0007669"/>
    <property type="project" value="UniProtKB-KW"/>
</dbReference>
<dbReference type="GO" id="GO:0008237">
    <property type="term" value="F:metallopeptidase activity"/>
    <property type="evidence" value="ECO:0007669"/>
    <property type="project" value="UniProtKB-KW"/>
</dbReference>
<dbReference type="GO" id="GO:0006508">
    <property type="term" value="P:proteolysis"/>
    <property type="evidence" value="ECO:0007669"/>
    <property type="project" value="UniProtKB-KW"/>
</dbReference>
<dbReference type="CDD" id="cd08071">
    <property type="entry name" value="MPN_DUF2466"/>
    <property type="match status" value="1"/>
</dbReference>
<dbReference type="FunFam" id="3.40.140.10:FF:000032">
    <property type="entry name" value="DNA repair protein RadC"/>
    <property type="match status" value="1"/>
</dbReference>
<dbReference type="Gene3D" id="3.40.140.10">
    <property type="entry name" value="Cytidine Deaminase, domain 2"/>
    <property type="match status" value="1"/>
</dbReference>
<dbReference type="InterPro" id="IPR037518">
    <property type="entry name" value="MPN"/>
</dbReference>
<dbReference type="InterPro" id="IPR025657">
    <property type="entry name" value="RadC_JAB"/>
</dbReference>
<dbReference type="InterPro" id="IPR010994">
    <property type="entry name" value="RuvA_2-like"/>
</dbReference>
<dbReference type="InterPro" id="IPR001405">
    <property type="entry name" value="UPF0758"/>
</dbReference>
<dbReference type="InterPro" id="IPR020891">
    <property type="entry name" value="UPF0758_CS"/>
</dbReference>
<dbReference type="InterPro" id="IPR046778">
    <property type="entry name" value="UPF0758_N"/>
</dbReference>
<dbReference type="NCBIfam" id="NF000642">
    <property type="entry name" value="PRK00024.1"/>
    <property type="match status" value="1"/>
</dbReference>
<dbReference type="NCBIfam" id="TIGR00608">
    <property type="entry name" value="radc"/>
    <property type="match status" value="1"/>
</dbReference>
<dbReference type="PANTHER" id="PTHR30471">
    <property type="entry name" value="DNA REPAIR PROTEIN RADC"/>
    <property type="match status" value="1"/>
</dbReference>
<dbReference type="PANTHER" id="PTHR30471:SF3">
    <property type="entry name" value="UPF0758 PROTEIN YEES-RELATED"/>
    <property type="match status" value="1"/>
</dbReference>
<dbReference type="Pfam" id="PF04002">
    <property type="entry name" value="RadC"/>
    <property type="match status" value="1"/>
</dbReference>
<dbReference type="Pfam" id="PF20582">
    <property type="entry name" value="UPF0758_N"/>
    <property type="match status" value="1"/>
</dbReference>
<dbReference type="SUPFAM" id="SSF102712">
    <property type="entry name" value="JAB1/MPN domain"/>
    <property type="match status" value="1"/>
</dbReference>
<dbReference type="SUPFAM" id="SSF47781">
    <property type="entry name" value="RuvA domain 2-like"/>
    <property type="match status" value="1"/>
</dbReference>
<dbReference type="PROSITE" id="PS50249">
    <property type="entry name" value="MPN"/>
    <property type="match status" value="1"/>
</dbReference>
<dbReference type="PROSITE" id="PS01302">
    <property type="entry name" value="UPF0758"/>
    <property type="match status" value="1"/>
</dbReference>